<sequence>MATIESRLVEMLTVPVEALGFELWGIEFVHAGRHSIVRVFIDSEKGIFIEDCAETSRQVSAVLDVEDPITTEYTLEVSSPGVDRPLFTAAQYQAYIGEDAKVQLTMPVAGSRNLKGVISKVEGQILTLNVDGKDLIIALDNIRKGNIIAKF</sequence>
<evidence type="ECO:0000255" key="1">
    <source>
        <dbReference type="HAMAP-Rule" id="MF_01077"/>
    </source>
</evidence>
<reference key="1">
    <citation type="submission" date="2006-03" db="EMBL/GenBank/DDBJ databases">
        <title>Complete sequence of Shewanella denitrificans OS217.</title>
        <authorList>
            <consortium name="US DOE Joint Genome Institute"/>
            <person name="Copeland A."/>
            <person name="Lucas S."/>
            <person name="Lapidus A."/>
            <person name="Barry K."/>
            <person name="Detter J.C."/>
            <person name="Glavina del Rio T."/>
            <person name="Hammon N."/>
            <person name="Israni S."/>
            <person name="Dalin E."/>
            <person name="Tice H."/>
            <person name="Pitluck S."/>
            <person name="Brettin T."/>
            <person name="Bruce D."/>
            <person name="Han C."/>
            <person name="Tapia R."/>
            <person name="Gilna P."/>
            <person name="Kiss H."/>
            <person name="Schmutz J."/>
            <person name="Larimer F."/>
            <person name="Land M."/>
            <person name="Hauser L."/>
            <person name="Kyrpides N."/>
            <person name="Lykidis A."/>
            <person name="Richardson P."/>
        </authorList>
    </citation>
    <scope>NUCLEOTIDE SEQUENCE [LARGE SCALE GENOMIC DNA]</scope>
    <source>
        <strain>OS217 / ATCC BAA-1090 / DSM 15013</strain>
    </source>
</reference>
<name>RIMP_SHEDO</name>
<organism>
    <name type="scientific">Shewanella denitrificans (strain OS217 / ATCC BAA-1090 / DSM 15013)</name>
    <dbReference type="NCBI Taxonomy" id="318161"/>
    <lineage>
        <taxon>Bacteria</taxon>
        <taxon>Pseudomonadati</taxon>
        <taxon>Pseudomonadota</taxon>
        <taxon>Gammaproteobacteria</taxon>
        <taxon>Alteromonadales</taxon>
        <taxon>Shewanellaceae</taxon>
        <taxon>Shewanella</taxon>
    </lineage>
</organism>
<feature type="chain" id="PRO_1000064769" description="Ribosome maturation factor RimP">
    <location>
        <begin position="1"/>
        <end position="151"/>
    </location>
</feature>
<keyword id="KW-0963">Cytoplasm</keyword>
<keyword id="KW-1185">Reference proteome</keyword>
<keyword id="KW-0690">Ribosome biogenesis</keyword>
<protein>
    <recommendedName>
        <fullName evidence="1">Ribosome maturation factor RimP</fullName>
    </recommendedName>
</protein>
<comment type="function">
    <text evidence="1">Required for maturation of 30S ribosomal subunits.</text>
</comment>
<comment type="subcellular location">
    <subcellularLocation>
        <location evidence="1">Cytoplasm</location>
    </subcellularLocation>
</comment>
<comment type="similarity">
    <text evidence="1">Belongs to the RimP family.</text>
</comment>
<gene>
    <name evidence="1" type="primary">rimP</name>
    <name type="ordered locus">Sden_1005</name>
</gene>
<proteinExistence type="inferred from homology"/>
<dbReference type="EMBL" id="CP000302">
    <property type="protein sequence ID" value="ABE54293.1"/>
    <property type="molecule type" value="Genomic_DNA"/>
</dbReference>
<dbReference type="RefSeq" id="WP_011495457.1">
    <property type="nucleotide sequence ID" value="NC_007954.1"/>
</dbReference>
<dbReference type="SMR" id="Q12QI3"/>
<dbReference type="STRING" id="318161.Sden_1005"/>
<dbReference type="KEGG" id="sdn:Sden_1005"/>
<dbReference type="eggNOG" id="COG0779">
    <property type="taxonomic scope" value="Bacteria"/>
</dbReference>
<dbReference type="HOGENOM" id="CLU_070525_1_1_6"/>
<dbReference type="OrthoDB" id="9805006at2"/>
<dbReference type="Proteomes" id="UP000001982">
    <property type="component" value="Chromosome"/>
</dbReference>
<dbReference type="GO" id="GO:0005829">
    <property type="term" value="C:cytosol"/>
    <property type="evidence" value="ECO:0007669"/>
    <property type="project" value="TreeGrafter"/>
</dbReference>
<dbReference type="GO" id="GO:0000028">
    <property type="term" value="P:ribosomal small subunit assembly"/>
    <property type="evidence" value="ECO:0007669"/>
    <property type="project" value="TreeGrafter"/>
</dbReference>
<dbReference type="GO" id="GO:0006412">
    <property type="term" value="P:translation"/>
    <property type="evidence" value="ECO:0007669"/>
    <property type="project" value="TreeGrafter"/>
</dbReference>
<dbReference type="CDD" id="cd01734">
    <property type="entry name" value="YlxS_C"/>
    <property type="match status" value="1"/>
</dbReference>
<dbReference type="FunFam" id="3.30.300.70:FF:000001">
    <property type="entry name" value="Ribosome maturation factor RimP"/>
    <property type="match status" value="1"/>
</dbReference>
<dbReference type="Gene3D" id="2.30.30.180">
    <property type="entry name" value="Ribosome maturation factor RimP, C-terminal domain"/>
    <property type="match status" value="1"/>
</dbReference>
<dbReference type="Gene3D" id="3.30.300.70">
    <property type="entry name" value="RimP-like superfamily, N-terminal"/>
    <property type="match status" value="1"/>
</dbReference>
<dbReference type="HAMAP" id="MF_01077">
    <property type="entry name" value="RimP"/>
    <property type="match status" value="1"/>
</dbReference>
<dbReference type="InterPro" id="IPR003728">
    <property type="entry name" value="Ribosome_maturation_RimP"/>
</dbReference>
<dbReference type="InterPro" id="IPR028998">
    <property type="entry name" value="RimP_C"/>
</dbReference>
<dbReference type="InterPro" id="IPR036847">
    <property type="entry name" value="RimP_C_sf"/>
</dbReference>
<dbReference type="InterPro" id="IPR028989">
    <property type="entry name" value="RimP_N"/>
</dbReference>
<dbReference type="InterPro" id="IPR035956">
    <property type="entry name" value="RimP_N_sf"/>
</dbReference>
<dbReference type="NCBIfam" id="NF000927">
    <property type="entry name" value="PRK00092.1-1"/>
    <property type="match status" value="1"/>
</dbReference>
<dbReference type="PANTHER" id="PTHR33867">
    <property type="entry name" value="RIBOSOME MATURATION FACTOR RIMP"/>
    <property type="match status" value="1"/>
</dbReference>
<dbReference type="PANTHER" id="PTHR33867:SF1">
    <property type="entry name" value="RIBOSOME MATURATION FACTOR RIMP"/>
    <property type="match status" value="1"/>
</dbReference>
<dbReference type="Pfam" id="PF17384">
    <property type="entry name" value="DUF150_C"/>
    <property type="match status" value="1"/>
</dbReference>
<dbReference type="Pfam" id="PF02576">
    <property type="entry name" value="RimP_N"/>
    <property type="match status" value="1"/>
</dbReference>
<dbReference type="SUPFAM" id="SSF74942">
    <property type="entry name" value="YhbC-like, C-terminal domain"/>
    <property type="match status" value="1"/>
</dbReference>
<dbReference type="SUPFAM" id="SSF75420">
    <property type="entry name" value="YhbC-like, N-terminal domain"/>
    <property type="match status" value="1"/>
</dbReference>
<accession>Q12QI3</accession>